<feature type="chain" id="PRO_0000187342" description="Large ribosomal subunit protein bL34">
    <location>
        <begin position="1"/>
        <end position="53"/>
    </location>
</feature>
<feature type="region of interest" description="Disordered" evidence="2">
    <location>
        <begin position="1"/>
        <end position="53"/>
    </location>
</feature>
<feature type="compositionally biased region" description="Basic residues" evidence="2">
    <location>
        <begin position="1"/>
        <end position="16"/>
    </location>
</feature>
<feature type="compositionally biased region" description="Basic residues" evidence="2">
    <location>
        <begin position="31"/>
        <end position="42"/>
    </location>
</feature>
<sequence length="53" mass="6303">MKRTFQPSNRKRKNKHGFRERMASANGRRVLAARRAKGRKKLTVSDEYNGQKW</sequence>
<proteinExistence type="inferred from homology"/>
<gene>
    <name evidence="1" type="primary">rpmH</name>
    <name type="ordered locus">BT_3710</name>
</gene>
<reference key="1">
    <citation type="journal article" date="2003" name="Science">
        <title>A genomic view of the human-Bacteroides thetaiotaomicron symbiosis.</title>
        <authorList>
            <person name="Xu J."/>
            <person name="Bjursell M.K."/>
            <person name="Himrod J."/>
            <person name="Deng S."/>
            <person name="Carmichael L.K."/>
            <person name="Chiang H.C."/>
            <person name="Hooper L.V."/>
            <person name="Gordon J.I."/>
        </authorList>
    </citation>
    <scope>NUCLEOTIDE SEQUENCE [LARGE SCALE GENOMIC DNA]</scope>
    <source>
        <strain>ATCC 29148 / DSM 2079 / JCM 5827 / CCUG 10774 / NCTC 10582 / VPI-5482 / E50</strain>
    </source>
</reference>
<protein>
    <recommendedName>
        <fullName evidence="1">Large ribosomal subunit protein bL34</fullName>
    </recommendedName>
    <alternativeName>
        <fullName evidence="3">50S ribosomal protein L34</fullName>
    </alternativeName>
</protein>
<dbReference type="EMBL" id="AE015928">
    <property type="protein sequence ID" value="AAO78815.1"/>
    <property type="molecule type" value="Genomic_DNA"/>
</dbReference>
<dbReference type="RefSeq" id="NP_812621.1">
    <property type="nucleotide sequence ID" value="NC_004663.1"/>
</dbReference>
<dbReference type="RefSeq" id="WP_005678985.1">
    <property type="nucleotide sequence ID" value="NZ_UYXG01000004.1"/>
</dbReference>
<dbReference type="SMR" id="Q8A1F6"/>
<dbReference type="FunCoup" id="Q8A1F6">
    <property type="interactions" value="355"/>
</dbReference>
<dbReference type="STRING" id="226186.BT_3710"/>
<dbReference type="PaxDb" id="226186-BT_3710"/>
<dbReference type="EnsemblBacteria" id="AAO78815">
    <property type="protein sequence ID" value="AAO78815"/>
    <property type="gene ID" value="BT_3710"/>
</dbReference>
<dbReference type="GeneID" id="93047666"/>
<dbReference type="KEGG" id="bth:BT_3710"/>
<dbReference type="PATRIC" id="fig|226186.12.peg.3770"/>
<dbReference type="eggNOG" id="COG0230">
    <property type="taxonomic scope" value="Bacteria"/>
</dbReference>
<dbReference type="HOGENOM" id="CLU_129938_2_0_10"/>
<dbReference type="InParanoid" id="Q8A1F6"/>
<dbReference type="OrthoDB" id="9804164at2"/>
<dbReference type="Proteomes" id="UP000001414">
    <property type="component" value="Chromosome"/>
</dbReference>
<dbReference type="GO" id="GO:1990904">
    <property type="term" value="C:ribonucleoprotein complex"/>
    <property type="evidence" value="ECO:0007669"/>
    <property type="project" value="UniProtKB-KW"/>
</dbReference>
<dbReference type="GO" id="GO:0005840">
    <property type="term" value="C:ribosome"/>
    <property type="evidence" value="ECO:0007669"/>
    <property type="project" value="UniProtKB-KW"/>
</dbReference>
<dbReference type="GO" id="GO:0003735">
    <property type="term" value="F:structural constituent of ribosome"/>
    <property type="evidence" value="ECO:0007669"/>
    <property type="project" value="InterPro"/>
</dbReference>
<dbReference type="GO" id="GO:0006412">
    <property type="term" value="P:translation"/>
    <property type="evidence" value="ECO:0007669"/>
    <property type="project" value="UniProtKB-UniRule"/>
</dbReference>
<dbReference type="FunFam" id="1.10.287.3980:FF:000001">
    <property type="entry name" value="Mitochondrial ribosomal protein L34"/>
    <property type="match status" value="1"/>
</dbReference>
<dbReference type="Gene3D" id="1.10.287.3980">
    <property type="match status" value="1"/>
</dbReference>
<dbReference type="HAMAP" id="MF_00391">
    <property type="entry name" value="Ribosomal_bL34"/>
    <property type="match status" value="1"/>
</dbReference>
<dbReference type="InterPro" id="IPR000271">
    <property type="entry name" value="Ribosomal_bL34"/>
</dbReference>
<dbReference type="InterPro" id="IPR020939">
    <property type="entry name" value="Ribosomal_bL34_CS"/>
</dbReference>
<dbReference type="NCBIfam" id="TIGR01030">
    <property type="entry name" value="rpmH_bact"/>
    <property type="match status" value="1"/>
</dbReference>
<dbReference type="PANTHER" id="PTHR14503:SF4">
    <property type="entry name" value="LARGE RIBOSOMAL SUBUNIT PROTEIN BL34M"/>
    <property type="match status" value="1"/>
</dbReference>
<dbReference type="PANTHER" id="PTHR14503">
    <property type="entry name" value="MITOCHONDRIAL RIBOSOMAL PROTEIN 34 FAMILY MEMBER"/>
    <property type="match status" value="1"/>
</dbReference>
<dbReference type="Pfam" id="PF00468">
    <property type="entry name" value="Ribosomal_L34"/>
    <property type="match status" value="1"/>
</dbReference>
<dbReference type="PROSITE" id="PS00784">
    <property type="entry name" value="RIBOSOMAL_L34"/>
    <property type="match status" value="1"/>
</dbReference>
<keyword id="KW-1185">Reference proteome</keyword>
<keyword id="KW-0687">Ribonucleoprotein</keyword>
<keyword id="KW-0689">Ribosomal protein</keyword>
<comment type="similarity">
    <text evidence="1">Belongs to the bacterial ribosomal protein bL34 family.</text>
</comment>
<organism>
    <name type="scientific">Bacteroides thetaiotaomicron (strain ATCC 29148 / DSM 2079 / JCM 5827 / CCUG 10774 / NCTC 10582 / VPI-5482 / E50)</name>
    <dbReference type="NCBI Taxonomy" id="226186"/>
    <lineage>
        <taxon>Bacteria</taxon>
        <taxon>Pseudomonadati</taxon>
        <taxon>Bacteroidota</taxon>
        <taxon>Bacteroidia</taxon>
        <taxon>Bacteroidales</taxon>
        <taxon>Bacteroidaceae</taxon>
        <taxon>Bacteroides</taxon>
    </lineage>
</organism>
<accession>Q8A1F6</accession>
<evidence type="ECO:0000255" key="1">
    <source>
        <dbReference type="HAMAP-Rule" id="MF_00391"/>
    </source>
</evidence>
<evidence type="ECO:0000256" key="2">
    <source>
        <dbReference type="SAM" id="MobiDB-lite"/>
    </source>
</evidence>
<evidence type="ECO:0000305" key="3"/>
<name>RL34_BACTN</name>